<reference key="1">
    <citation type="journal article" date="1984" name="Science">
        <title>Transforming potential of human c-sis nucleotide sequences encoding platelet-derived growth factor.</title>
        <authorList>
            <person name="Josephs S.F."/>
            <person name="Ratner L."/>
            <person name="Clarke M.F."/>
            <person name="Westin E.H."/>
            <person name="Reitz M.S."/>
            <person name="Wong-Staal F."/>
        </authorList>
    </citation>
    <scope>NUCLEOTIDE SEQUENCE [GENOMIC DNA]</scope>
</reference>
<reference key="2">
    <citation type="journal article" date="1985" name="Nature">
        <title>Cultured human endothelial cells express platelet-derived growth factor B chain: cDNA cloning and structural analysis.</title>
        <authorList>
            <person name="Collins T."/>
            <person name="Ginsburg D."/>
            <person name="Boss J.M."/>
            <person name="Orkin S.H."/>
            <person name="Pober J.S."/>
        </authorList>
    </citation>
    <scope>NUCLEOTIDE SEQUENCE [MRNA] (ISOFORM 1)</scope>
</reference>
<reference key="3">
    <citation type="journal article" date="1985" name="Nucleic Acids Res.">
        <title>Nucleotide sequence of transforming human c-sis cDNA clones with homology to platelet-derived growth factor.</title>
        <authorList>
            <person name="Ratner L."/>
            <person name="Josephs S.F."/>
            <person name="Jarrett R."/>
            <person name="Reitz M.S."/>
            <person name="Wong-Staal F."/>
        </authorList>
    </citation>
    <scope>NUCLEOTIDE SEQUENCE [MRNA] (ISOFORM 1)</scope>
</reference>
<reference key="4">
    <citation type="journal article" date="1986" name="Cold Spring Harb. Symp. Quant. Biol.">
        <title>Oncogenic potential of the human platelet-derived growth factor transcriptional unit.</title>
        <authorList>
            <person name="Rao C.D."/>
            <person name="Igarashi H."/>
            <person name="Pech M.W."/>
            <person name="Robbins K.C."/>
            <person name="Aaronson S.A."/>
        </authorList>
    </citation>
    <scope>NUCLEOTIDE SEQUENCE [MRNA] (ISOFORM 1)</scope>
</reference>
<reference key="5">
    <citation type="journal article" date="1986" name="Proc. Natl. Acad. Sci. U.S.A.">
        <title>Structure and sequence of the human c-sis/platelet-derived growth factor 2 (SIS/PDGF2) transcriptional unit.</title>
        <authorList>
            <person name="Rao C.D."/>
            <person name="Igarashi H."/>
            <person name="Chiu I.-M."/>
            <person name="Robbins K.C."/>
            <person name="Aaronson S.A."/>
        </authorList>
    </citation>
    <scope>NUCLEOTIDE SEQUENCE [MRNA] (ISOFORM 1)</scope>
</reference>
<reference key="6">
    <citation type="journal article" date="2004" name="Genome Biol.">
        <title>A genome annotation-driven approach to cloning the human ORFeome.</title>
        <authorList>
            <person name="Collins J.E."/>
            <person name="Wright C.L."/>
            <person name="Edwards C.A."/>
            <person name="Davis M.P."/>
            <person name="Grinham J.A."/>
            <person name="Cole C.G."/>
            <person name="Goward M.E."/>
            <person name="Aguado B."/>
            <person name="Mallya M."/>
            <person name="Mokrab Y."/>
            <person name="Huckle E.J."/>
            <person name="Beare D.M."/>
            <person name="Dunham I."/>
        </authorList>
    </citation>
    <scope>NUCLEOTIDE SEQUENCE [LARGE SCALE MRNA] (ISOFORM 1)</scope>
</reference>
<reference key="7">
    <citation type="submission" date="2004-06" db="EMBL/GenBank/DDBJ databases">
        <title>Cloning of human full open reading frames in Gateway(TM) system entry vector (pDONR201).</title>
        <authorList>
            <person name="Ebert L."/>
            <person name="Schick M."/>
            <person name="Neubert P."/>
            <person name="Schatten R."/>
            <person name="Henze S."/>
            <person name="Korn B."/>
        </authorList>
    </citation>
    <scope>NUCLEOTIDE SEQUENCE [LARGE SCALE MRNA] (ISOFORM 1)</scope>
</reference>
<reference key="8">
    <citation type="journal article" date="1999" name="Nature">
        <title>The DNA sequence of human chromosome 22.</title>
        <authorList>
            <person name="Dunham I."/>
            <person name="Hunt A.R."/>
            <person name="Collins J.E."/>
            <person name="Bruskiewich R."/>
            <person name="Beare D.M."/>
            <person name="Clamp M."/>
            <person name="Smink L.J."/>
            <person name="Ainscough R."/>
            <person name="Almeida J.P."/>
            <person name="Babbage A.K."/>
            <person name="Bagguley C."/>
            <person name="Bailey J."/>
            <person name="Barlow K.F."/>
            <person name="Bates K.N."/>
            <person name="Beasley O.P."/>
            <person name="Bird C.P."/>
            <person name="Blakey S.E."/>
            <person name="Bridgeman A.M."/>
            <person name="Buck D."/>
            <person name="Burgess J."/>
            <person name="Burrill W.D."/>
            <person name="Burton J."/>
            <person name="Carder C."/>
            <person name="Carter N.P."/>
            <person name="Chen Y."/>
            <person name="Clark G."/>
            <person name="Clegg S.M."/>
            <person name="Cobley V.E."/>
            <person name="Cole C.G."/>
            <person name="Collier R.E."/>
            <person name="Connor R."/>
            <person name="Conroy D."/>
            <person name="Corby N.R."/>
            <person name="Coville G.J."/>
            <person name="Cox A.V."/>
            <person name="Davis J."/>
            <person name="Dawson E."/>
            <person name="Dhami P.D."/>
            <person name="Dockree C."/>
            <person name="Dodsworth S.J."/>
            <person name="Durbin R.M."/>
            <person name="Ellington A.G."/>
            <person name="Evans K.L."/>
            <person name="Fey J.M."/>
            <person name="Fleming K."/>
            <person name="French L."/>
            <person name="Garner A.A."/>
            <person name="Gilbert J.G.R."/>
            <person name="Goward M.E."/>
            <person name="Grafham D.V."/>
            <person name="Griffiths M.N.D."/>
            <person name="Hall C."/>
            <person name="Hall R.E."/>
            <person name="Hall-Tamlyn G."/>
            <person name="Heathcott R.W."/>
            <person name="Ho S."/>
            <person name="Holmes S."/>
            <person name="Hunt S.E."/>
            <person name="Jones M.C."/>
            <person name="Kershaw J."/>
            <person name="Kimberley A.M."/>
            <person name="King A."/>
            <person name="Laird G.K."/>
            <person name="Langford C.F."/>
            <person name="Leversha M.A."/>
            <person name="Lloyd C."/>
            <person name="Lloyd D.M."/>
            <person name="Martyn I.D."/>
            <person name="Mashreghi-Mohammadi M."/>
            <person name="Matthews L.H."/>
            <person name="Mccann O.T."/>
            <person name="Mcclay J."/>
            <person name="Mclaren S."/>
            <person name="McMurray A.A."/>
            <person name="Milne S.A."/>
            <person name="Mortimore B.J."/>
            <person name="Odell C.N."/>
            <person name="Pavitt R."/>
            <person name="Pearce A.V."/>
            <person name="Pearson D."/>
            <person name="Phillimore B.J.C.T."/>
            <person name="Phillips S.H."/>
            <person name="Plumb R.W."/>
            <person name="Ramsay H."/>
            <person name="Ramsey Y."/>
            <person name="Rogers L."/>
            <person name="Ross M.T."/>
            <person name="Scott C.E."/>
            <person name="Sehra H.K."/>
            <person name="Skuce C.D."/>
            <person name="Smalley S."/>
            <person name="Smith M.L."/>
            <person name="Soderlund C."/>
            <person name="Spragon L."/>
            <person name="Steward C.A."/>
            <person name="Sulston J.E."/>
            <person name="Swann R.M."/>
            <person name="Vaudin M."/>
            <person name="Wall M."/>
            <person name="Wallis J.M."/>
            <person name="Whiteley M.N."/>
            <person name="Willey D.L."/>
            <person name="Williams L."/>
            <person name="Williams S.A."/>
            <person name="Williamson H."/>
            <person name="Wilmer T.E."/>
            <person name="Wilming L."/>
            <person name="Wright C.L."/>
            <person name="Hubbard T."/>
            <person name="Bentley D.R."/>
            <person name="Beck S."/>
            <person name="Rogers J."/>
            <person name="Shimizu N."/>
            <person name="Minoshima S."/>
            <person name="Kawasaki K."/>
            <person name="Sasaki T."/>
            <person name="Asakawa S."/>
            <person name="Kudoh J."/>
            <person name="Shintani A."/>
            <person name="Shibuya K."/>
            <person name="Yoshizaki Y."/>
            <person name="Aoki N."/>
            <person name="Mitsuyama S."/>
            <person name="Roe B.A."/>
            <person name="Chen F."/>
            <person name="Chu L."/>
            <person name="Crabtree J."/>
            <person name="Deschamps S."/>
            <person name="Do A."/>
            <person name="Do T."/>
            <person name="Dorman A."/>
            <person name="Fang F."/>
            <person name="Fu Y."/>
            <person name="Hu P."/>
            <person name="Hua A."/>
            <person name="Kenton S."/>
            <person name="Lai H."/>
            <person name="Lao H.I."/>
            <person name="Lewis J."/>
            <person name="Lewis S."/>
            <person name="Lin S.-P."/>
            <person name="Loh P."/>
            <person name="Malaj E."/>
            <person name="Nguyen T."/>
            <person name="Pan H."/>
            <person name="Phan S."/>
            <person name="Qi S."/>
            <person name="Qian Y."/>
            <person name="Ray L."/>
            <person name="Ren Q."/>
            <person name="Shaull S."/>
            <person name="Sloan D."/>
            <person name="Song L."/>
            <person name="Wang Q."/>
            <person name="Wang Y."/>
            <person name="Wang Z."/>
            <person name="White J."/>
            <person name="Willingham D."/>
            <person name="Wu H."/>
            <person name="Yao Z."/>
            <person name="Zhan M."/>
            <person name="Zhang G."/>
            <person name="Chissoe S."/>
            <person name="Murray J."/>
            <person name="Miller N."/>
            <person name="Minx P."/>
            <person name="Fulton R."/>
            <person name="Johnson D."/>
            <person name="Bemis G."/>
            <person name="Bentley D."/>
            <person name="Bradshaw H."/>
            <person name="Bourne S."/>
            <person name="Cordes M."/>
            <person name="Du Z."/>
            <person name="Fulton L."/>
            <person name="Goela D."/>
            <person name="Graves T."/>
            <person name="Hawkins J."/>
            <person name="Hinds K."/>
            <person name="Kemp K."/>
            <person name="Latreille P."/>
            <person name="Layman D."/>
            <person name="Ozersky P."/>
            <person name="Rohlfing T."/>
            <person name="Scheet P."/>
            <person name="Walker C."/>
            <person name="Wamsley A."/>
            <person name="Wohldmann P."/>
            <person name="Pepin K."/>
            <person name="Nelson J."/>
            <person name="Korf I."/>
            <person name="Bedell J.A."/>
            <person name="Hillier L.W."/>
            <person name="Mardis E."/>
            <person name="Waterston R."/>
            <person name="Wilson R."/>
            <person name="Emanuel B.S."/>
            <person name="Shaikh T."/>
            <person name="Kurahashi H."/>
            <person name="Saitta S."/>
            <person name="Budarf M.L."/>
            <person name="McDermid H.E."/>
            <person name="Johnson A."/>
            <person name="Wong A.C.C."/>
            <person name="Morrow B.E."/>
            <person name="Edelmann L."/>
            <person name="Kim U.J."/>
            <person name="Shizuya H."/>
            <person name="Simon M.I."/>
            <person name="Dumanski J.P."/>
            <person name="Peyrard M."/>
            <person name="Kedra D."/>
            <person name="Seroussi E."/>
            <person name="Fransson I."/>
            <person name="Tapia I."/>
            <person name="Bruder C.E."/>
            <person name="O'Brien K.P."/>
            <person name="Wilkinson P."/>
            <person name="Bodenteich A."/>
            <person name="Hartman K."/>
            <person name="Hu X."/>
            <person name="Khan A.S."/>
            <person name="Lane L."/>
            <person name="Tilahun Y."/>
            <person name="Wright H."/>
        </authorList>
    </citation>
    <scope>NUCLEOTIDE SEQUENCE [LARGE SCALE GENOMIC DNA]</scope>
</reference>
<reference key="9">
    <citation type="submission" date="2005-07" db="EMBL/GenBank/DDBJ databases">
        <authorList>
            <person name="Mural R.J."/>
            <person name="Istrail S."/>
            <person name="Sutton G.G."/>
            <person name="Florea L."/>
            <person name="Halpern A.L."/>
            <person name="Mobarry C.M."/>
            <person name="Lippert R."/>
            <person name="Walenz B."/>
            <person name="Shatkay H."/>
            <person name="Dew I."/>
            <person name="Miller J.R."/>
            <person name="Flanigan M.J."/>
            <person name="Edwards N.J."/>
            <person name="Bolanos R."/>
            <person name="Fasulo D."/>
            <person name="Halldorsson B.V."/>
            <person name="Hannenhalli S."/>
            <person name="Turner R."/>
            <person name="Yooseph S."/>
            <person name="Lu F."/>
            <person name="Nusskern D.R."/>
            <person name="Shue B.C."/>
            <person name="Zheng X.H."/>
            <person name="Zhong F."/>
            <person name="Delcher A.L."/>
            <person name="Huson D.H."/>
            <person name="Kravitz S.A."/>
            <person name="Mouchard L."/>
            <person name="Reinert K."/>
            <person name="Remington K.A."/>
            <person name="Clark A.G."/>
            <person name="Waterman M.S."/>
            <person name="Eichler E.E."/>
            <person name="Adams M.D."/>
            <person name="Hunkapiller M.W."/>
            <person name="Myers E.W."/>
            <person name="Venter J.C."/>
        </authorList>
    </citation>
    <scope>NUCLEOTIDE SEQUENCE [LARGE SCALE GENOMIC DNA]</scope>
</reference>
<reference key="10">
    <citation type="journal article" date="2004" name="Genome Res.">
        <title>The status, quality, and expansion of the NIH full-length cDNA project: the Mammalian Gene Collection (MGC).</title>
        <authorList>
            <consortium name="The MGC Project Team"/>
        </authorList>
    </citation>
    <scope>NUCLEOTIDE SEQUENCE [LARGE SCALE MRNA] (ISOFORM 1)</scope>
    <source>
        <tissue>Brain</tissue>
        <tissue>Lung</tissue>
        <tissue>Pancreas</tissue>
        <tissue>Testis</tissue>
    </source>
</reference>
<reference key="11">
    <citation type="journal article" date="1995" name="Nucleic Acids Res.">
        <title>A novel human c-sis mRNA species is transcribed from a promoter in c-sis intron 1 and contains the code for an alternative PDGF B-like protein.</title>
        <authorList>
            <person name="Dirks R.P.H."/>
            <person name="Onnekink C."/>
            <person name="Jansen H.J."/>
            <person name="de Jong A."/>
            <person name="Bloemers H.P.J."/>
        </authorList>
    </citation>
    <scope>NUCLEOTIDE SEQUENCE [MRNA] OF 1-185 (ISOFORM 2)</scope>
    <source>
        <tissue>Choriocarcinoma</tissue>
    </source>
</reference>
<reference key="12">
    <citation type="journal article" date="1997" name="Nat. Genet.">
        <title>Deregulation of the platelet-derived growth factor B-chain gene via fusion with collagen gene COL1A1 in dermatofibrosarcoma protuberans and giant-cell fibroblastoma.</title>
        <authorList>
            <person name="Simon M.-P."/>
            <person name="Pedeutour F."/>
            <person name="Sirvent N."/>
            <person name="Grosgeorge J."/>
            <person name="Minoletti F."/>
            <person name="Coindre J.-M."/>
            <person name="Terrier-Lacombe M.-J."/>
            <person name="Mandahl N."/>
            <person name="Craver R.D."/>
            <person name="Blin N."/>
            <person name="Sozzi G."/>
            <person name="Turc-Carel C."/>
            <person name="O'Brien K.P."/>
            <person name="Kedra D."/>
            <person name="Fransson I."/>
            <person name="Guilbaud C."/>
            <person name="Dumanski J.P."/>
        </authorList>
    </citation>
    <scope>NUCLEOTIDE SEQUENCE [GENOMIC DNA] OF 1-53</scope>
    <scope>CHROMOSOMAL TRANSLOCATION WITH COL1A1</scope>
</reference>
<reference key="13">
    <citation type="journal article" date="1984" name="Cell">
        <title>Nucleotide sequence analysis identifies the human c-sis proto-oncogene as a structural gene for platelet-derived growth factor.</title>
        <authorList>
            <person name="Chiu I.-M."/>
            <person name="Reddy E.P."/>
            <person name="Givol D."/>
            <person name="Robbins K.C."/>
            <person name="Tronick S.R."/>
            <person name="Aaronson S.A."/>
        </authorList>
    </citation>
    <scope>NUCLEOTIDE SEQUENCE [GENOMIC DNA] OF 22-241</scope>
</reference>
<reference key="14">
    <citation type="journal article" date="1986" name="FEBS Lett.">
        <title>The human osteosarcoma cell line U-2 OS expresses a 3.8 kilobase mRNA which codes for the sequence of the PDGF-B chain.</title>
        <authorList>
            <person name="Weich H.A."/>
            <person name="Sebald W."/>
            <person name="Schairer H.U."/>
            <person name="Hoppe J."/>
        </authorList>
    </citation>
    <scope>NUCLEOTIDE SEQUENCE [MRNA] OF 26-241 (ISOFORM 1)</scope>
</reference>
<reference key="15">
    <citation type="journal article" date="1983" name="Nature">
        <title>Platelet-derived growth factor is structurally related to the putative transforming protein p28sis of simian sarcoma virus.</title>
        <authorList>
            <person name="Waterfield M.D."/>
            <person name="Scrace G.T."/>
            <person name="Whittle N."/>
            <person name="Stroobant P."/>
            <person name="Johnsson A."/>
            <person name="Wasteson A."/>
            <person name="Westermark B."/>
            <person name="Heldin C.H."/>
            <person name="Huang J.S."/>
            <person name="Deuel T.F."/>
        </authorList>
    </citation>
    <scope>PROTEIN SEQUENCE OF 82-112</scope>
</reference>
<reference key="16">
    <citation type="journal article" date="1983" name="Science">
        <title>Human platelet-derived growth factor (PDGF): amino-terminal amino acid sequence.</title>
        <authorList>
            <person name="Antoniades H.N."/>
            <person name="Hunkapiller M.W."/>
        </authorList>
    </citation>
    <scope>PROTEIN SEQUENCE OF 82-110</scope>
</reference>
<reference key="17">
    <citation type="journal article" date="1984" name="EMBO J.">
        <title>The c-sis gene encodes a precursor of the B chain of platelet-derived growth factor.</title>
        <authorList>
            <person name="Johnsson A."/>
            <person name="Heldin C.H."/>
            <person name="Wasteson A."/>
            <person name="Westermark B."/>
            <person name="Deuel T.F."/>
            <person name="Huang J.S."/>
            <person name="Seeburg P.H."/>
            <person name="Gray A."/>
            <person name="Ullrich A."/>
            <person name="Scrace G."/>
            <person name="Stroobant P."/>
            <person name="Waterfield M.D."/>
        </authorList>
    </citation>
    <scope>NUCLEOTIDE SEQUENCE [GENOMIC DNA] OF 153-200</scope>
    <scope>PARTIAL PROTEIN SEQUENCE</scope>
</reference>
<reference key="18">
    <citation type="journal article" date="1991" name="EMBO J.">
        <title>Two PDGF-B chain residues, arginine 27 and isoleucine 30, mediate receptor binding and activation.</title>
        <authorList>
            <person name="Clements J.M."/>
            <person name="Bawden L.J."/>
            <person name="Bloxidge R.E."/>
            <person name="Catlin G."/>
            <person name="Cook A.L."/>
            <person name="Craig S."/>
            <person name="Drummond A.H."/>
            <person name="Edwards R.M."/>
            <person name="Fallon A."/>
            <person name="Green D.R."/>
            <person name="Hellewell P.G."/>
            <person name="Kirwin P.M."/>
            <person name="Nayee P.D."/>
            <person name="Richardson S.J."/>
            <person name="Brown D."/>
            <person name="Chahwala S.B."/>
            <person name="Snarey M."/>
            <person name="Winslow D."/>
        </authorList>
    </citation>
    <scope>MUTAGENESIS</scope>
    <scope>IMPORTANCE OF ARG-108 AND ILE-111 FOR RECEPTOR BINDING</scope>
</reference>
<reference key="19">
    <citation type="journal article" date="1992" name="J. Biol. Chem.">
        <title>Assignment of interchain disulfide bonds in platelet-derived growth factor (PDGF) and evidence for agonist activity of monomeric PDGF.</title>
        <authorList>
            <person name="Andersson M."/>
            <person name="Oestman A."/>
            <person name="Baeckstroem G."/>
            <person name="Hellman U."/>
            <person name="George-Nascimento C."/>
            <person name="Westermark B."/>
            <person name="Heldin C.-H."/>
        </authorList>
    </citation>
    <scope>INTERCHAIN DISULFIDE BONDS</scope>
</reference>
<reference key="20">
    <citation type="journal article" date="2001" name="Nat. Cell Biol.">
        <title>PDGF D, a novel protease-activated growth factor.</title>
        <authorList>
            <person name="LaRochelle W.J."/>
            <person name="Jeffers M."/>
            <person name="McDonald W.F."/>
            <person name="Chillakuru R.A."/>
            <person name="Giese N.A."/>
            <person name="Lokker N.A."/>
            <person name="Sullivan C."/>
            <person name="Boldog F.L."/>
            <person name="Yang M."/>
            <person name="Vernet C."/>
            <person name="Burgess C.E."/>
            <person name="Fernandez E."/>
            <person name="Deegler L.L."/>
            <person name="Rittman B."/>
            <person name="Shimkets J."/>
            <person name="Shimkets R.A."/>
            <person name="Rothberg J.M."/>
            <person name="Lichenstein H.S."/>
        </authorList>
    </citation>
    <scope>TISSUE SPECIFICITY</scope>
</reference>
<reference key="21">
    <citation type="journal article" date="2003" name="Cancer Genet. Cytogenet.">
        <title>Dermatofibrosarcoma protuberans of breast.</title>
        <authorList>
            <person name="Sandberg A.A."/>
            <person name="Anderson W.D."/>
            <person name="Fredenberg C."/>
            <person name="Hashimoto H."/>
        </authorList>
    </citation>
    <scope>DISEASE</scope>
    <scope>CHROMOSOMAL TRANSLOCATION WITH COL1A1</scope>
</reference>
<reference key="22">
    <citation type="journal article" date="2004" name="Biochem. J.">
        <title>The mosaic receptor sorLA/LR11 binds components of the plasminogen-activating system and platelet-derived growth factor-BB similarly to LRP1 (low-density lipoprotein receptor-related protein), but mediates slow internalization of bound ligand.</title>
        <authorList>
            <person name="Gliemann J."/>
            <person name="Hermey G."/>
            <person name="Nykjaer A."/>
            <person name="Petersen C.M."/>
            <person name="Jacobsen C."/>
            <person name="Andreasen P.A."/>
        </authorList>
    </citation>
    <scope>INTERACTION WITH LRP1 AND SORL1</scope>
</reference>
<reference key="23">
    <citation type="journal article" date="2006" name="Biochem. J.">
        <title>Tumour necrosis factor alpha-converting enzyme mediates ectodomain shedding of Vps10p-domain receptor family members.</title>
        <authorList>
            <person name="Hermey G."/>
            <person name="Sjoegaard S.S."/>
            <person name="Petersen C.M."/>
            <person name="Nykjaer A."/>
            <person name="Gliemann J."/>
        </authorList>
    </citation>
    <scope>INTERACTION WITH SORL1</scope>
</reference>
<reference key="24">
    <citation type="journal article" date="2015" name="PLoS ONE">
        <title>Functional characterization of germline mutations in PDGFB and PDGFRB in primary familial brain calcification.</title>
        <authorList>
            <person name="Vanlandewijck M."/>
            <person name="Lebouvier T."/>
            <person name="Andaloussi Maee M."/>
            <person name="Nahar K."/>
            <person name="Hornemann S."/>
            <person name="Kenkel D."/>
            <person name="Cunha S.I."/>
            <person name="Lennartsson J."/>
            <person name="Boss A."/>
            <person name="Heldin C.H."/>
            <person name="Keller A."/>
            <person name="Betsholtz C."/>
        </authorList>
    </citation>
    <scope>CHARACTERIZATION OF VARIANTS IBGC5 ARG-9 AND PRO-119</scope>
    <scope>FUNCTION</scope>
</reference>
<reference key="25">
    <citation type="journal article" date="2021" name="J. Hematol. Oncol.">
        <title>KAI1(CD82) is a key molecule to control angiogenesis and switch angiogenic milieu to quiescent state.</title>
        <authorList>
            <person name="Lee J.W."/>
            <person name="Hur J."/>
            <person name="Kwon Y.W."/>
            <person name="Chae C.W."/>
            <person name="Choi J.I."/>
            <person name="Hwang I."/>
            <person name="Yun J.Y."/>
            <person name="Kang J.A."/>
            <person name="Choi Y.E."/>
            <person name="Kim Y.H."/>
            <person name="Lee S.E."/>
            <person name="Lee C."/>
            <person name="Jo D.H."/>
            <person name="Seok H."/>
            <person name="Cho B.S."/>
            <person name="Baek S.H."/>
            <person name="Kim H.S."/>
        </authorList>
    </citation>
    <scope>INTERACTION WITH CD82</scope>
</reference>
<reference key="26">
    <citation type="journal article" date="2008" name="Genes Dev.">
        <title>Role of platelet-derived growth factors in physiology and medicine.</title>
        <authorList>
            <person name="Andrae J."/>
            <person name="Gallini R."/>
            <person name="Betsholtz C."/>
        </authorList>
    </citation>
    <scope>REVIEW ON FUNCTION IN DEVELOPMENT AND DISEASE</scope>
</reference>
<reference key="27">
    <citation type="journal article" date="1992" name="EMBO J.">
        <title>Crystal structure of human platelet-derived growth factor BB.</title>
        <authorList>
            <person name="Oefner C."/>
            <person name="D'Arcy A."/>
            <person name="Winkler F.K."/>
            <person name="Eggimann B."/>
            <person name="Hosang M."/>
        </authorList>
    </citation>
    <scope>X-RAY CRYSTALLOGRAPHY (3.0 ANGSTROMS)</scope>
</reference>
<reference key="28">
    <citation type="journal article" date="2010" name="Proc. Natl. Acad. Sci. U.S.A.">
        <title>Structures of a platelet-derived growth factor/propeptide complex and a platelet-derived growth factor/receptor complex.</title>
        <authorList>
            <person name="Shim A.H."/>
            <person name="Liu H."/>
            <person name="Focia P.J."/>
            <person name="Chen X."/>
            <person name="Lin P.C."/>
            <person name="He X."/>
        </authorList>
    </citation>
    <scope>X-RAY CRYSTALLOGRAPHY (2.3 ANGSTROMS) OF 21-185 IN COMPLEX WITH PDGFRB</scope>
    <scope>SUBUNIT</scope>
    <scope>DISULFIDE BONDS</scope>
</reference>
<reference key="29">
    <citation type="journal article" date="2013" name="Nat. Genet.">
        <title>Mutations in the gene encoding PDGF-B cause brain calcifications in humans and mice.</title>
        <authorList>
            <person name="Keller A."/>
            <person name="Westenberger A."/>
            <person name="Sobrido M.J."/>
            <person name="Garcia-Murias M."/>
            <person name="Domingo A."/>
            <person name="Sears R.L."/>
            <person name="Lemos R.R."/>
            <person name="Ordonez-Ugalde A."/>
            <person name="Nicolas G."/>
            <person name="da Cunha J.E."/>
            <person name="Rushing E.J."/>
            <person name="Hugelshofer M."/>
            <person name="Wurnig M.C."/>
            <person name="Kaech A."/>
            <person name="Reimann R."/>
            <person name="Lohmann K."/>
            <person name="Dobricic V."/>
            <person name="Carracedo A."/>
            <person name="Petrovic I."/>
            <person name="Miyasaki J.M."/>
            <person name="Abakumova I."/>
            <person name="Mae M.A."/>
            <person name="Raschperger E."/>
            <person name="Zatz M."/>
            <person name="Zschiedrich K."/>
            <person name="Klepper J."/>
            <person name="Spiteri E."/>
            <person name="Prieto J.M."/>
            <person name="Navas I."/>
            <person name="Preuss M."/>
            <person name="Dering C."/>
            <person name="Jankovic M."/>
            <person name="Paucar M."/>
            <person name="Svenningsson P."/>
            <person name="Saliminejad K."/>
            <person name="Khorshid H.R."/>
            <person name="Novakovic I."/>
            <person name="Aguzzi A."/>
            <person name="Boss A."/>
            <person name="Le Ber I."/>
            <person name="Defer G."/>
            <person name="Hannequin D."/>
            <person name="Kostic V.S."/>
            <person name="Campion D."/>
            <person name="Geschwind D.H."/>
            <person name="Coppola G."/>
            <person name="Betsholtz C."/>
            <person name="Klein C."/>
            <person name="Oliveira J.R."/>
        </authorList>
    </citation>
    <scope>VARIANTS IBGC5 ARG-9 AND PRO-119</scope>
</reference>
<protein>
    <recommendedName>
        <fullName>Platelet-derived growth factor subunit B</fullName>
        <shortName>PDGF subunit B</shortName>
    </recommendedName>
    <alternativeName>
        <fullName>PDGF-2</fullName>
    </alternativeName>
    <alternativeName>
        <fullName>Platelet-derived growth factor B chain</fullName>
    </alternativeName>
    <alternativeName>
        <fullName>Platelet-derived growth factor beta polypeptide</fullName>
    </alternativeName>
    <alternativeName>
        <fullName>Proto-oncogene c-Sis</fullName>
    </alternativeName>
    <innName>Becaplermin</innName>
</protein>
<proteinExistence type="evidence at protein level"/>
<accession>P01127</accession>
<accession>G3XAG8</accession>
<accession>P78431</accession>
<accession>Q15354</accession>
<accession>Q6FHE7</accession>
<accession>Q9UF23</accession>
<keyword id="KW-0002">3D-structure</keyword>
<keyword id="KW-0877">Alternative promoter usage</keyword>
<keyword id="KW-0160">Chromosomal rearrangement</keyword>
<keyword id="KW-0165">Cleavage on pair of basic residues</keyword>
<keyword id="KW-0217">Developmental protein</keyword>
<keyword id="KW-0903">Direct protein sequencing</keyword>
<keyword id="KW-0225">Disease variant</keyword>
<keyword id="KW-1015">Disulfide bond</keyword>
<keyword id="KW-0325">Glycoprotein</keyword>
<keyword id="KW-0339">Growth factor</keyword>
<keyword id="KW-0497">Mitogen</keyword>
<keyword id="KW-0582">Pharmaceutical</keyword>
<keyword id="KW-1267">Proteomics identification</keyword>
<keyword id="KW-0656">Proto-oncogene</keyword>
<keyword id="KW-1185">Reference proteome</keyword>
<keyword id="KW-0964">Secreted</keyword>
<keyword id="KW-0732">Signal</keyword>
<feature type="signal peptide">
    <location>
        <begin position="1"/>
        <end position="20"/>
    </location>
</feature>
<feature type="propeptide" id="PRO_0000023371" description="Removed in mature form">
    <location>
        <begin position="21"/>
        <end position="81"/>
    </location>
</feature>
<feature type="chain" id="PRO_0000023372" description="Platelet-derived growth factor subunit B">
    <location>
        <begin position="82"/>
        <end position="190"/>
    </location>
</feature>
<feature type="propeptide" id="PRO_0000023373" description="Removed in mature form">
    <location>
        <begin position="191"/>
        <end position="241"/>
    </location>
</feature>
<feature type="region of interest" description="Disordered" evidence="4">
    <location>
        <begin position="216"/>
        <end position="241"/>
    </location>
</feature>
<feature type="compositionally biased region" description="Basic residues" evidence="4">
    <location>
        <begin position="216"/>
        <end position="230"/>
    </location>
</feature>
<feature type="site" description="Involved in receptor binding">
    <location>
        <position position="108"/>
    </location>
</feature>
<feature type="site" description="Involved in receptor binding">
    <location>
        <position position="111"/>
    </location>
</feature>
<feature type="glycosylation site" description="N-linked (GlcNAc...) asparagine" evidence="3">
    <location>
        <position position="63"/>
    </location>
</feature>
<feature type="disulfide bond" evidence="9">
    <location>
        <begin position="97"/>
        <end position="141"/>
    </location>
</feature>
<feature type="disulfide bond" description="Interchain" evidence="9">
    <location>
        <position position="124"/>
    </location>
</feature>
<feature type="disulfide bond" evidence="9">
    <location>
        <begin position="130"/>
        <end position="178"/>
    </location>
</feature>
<feature type="disulfide bond" description="Interchain" evidence="9">
    <location>
        <position position="133"/>
    </location>
</feature>
<feature type="disulfide bond" evidence="9">
    <location>
        <begin position="134"/>
        <end position="180"/>
    </location>
</feature>
<feature type="splice variant" id="VSP_044913" description="In isoform 2." evidence="13">
    <original>MNRCWALFLSLCCYLRLVSAE</original>
    <variation>MFIMGL</variation>
    <location>
        <begin position="1"/>
        <end position="21"/>
    </location>
</feature>
<feature type="sequence variant" id="VAR_070870" description="In IBGC5; loss of protein expression." evidence="10 11">
    <original>L</original>
    <variation>R</variation>
    <location>
        <position position="9"/>
    </location>
</feature>
<feature type="sequence variant" id="VAR_014578" description="In dbSNP:rs17565.">
    <original>I</original>
    <variation>V</variation>
    <location>
        <position position="88"/>
    </location>
</feature>
<feature type="sequence variant" id="VAR_070871" description="In IBGC5; loss of protein expression; dbSNP:rs397515632." evidence="10 11">
    <original>L</original>
    <variation>P</variation>
    <location>
        <position position="119"/>
    </location>
</feature>
<feature type="sequence conflict" description="In Ref. 16; AA sequence." evidence="14" ref="16">
    <original>T</original>
    <variation>E</variation>
    <location>
        <position position="101"/>
    </location>
</feature>
<feature type="sequence conflict" description="In Ref. 16; AA sequence." evidence="14" ref="16">
    <original>E</original>
    <variation>C</variation>
    <location>
        <position position="105"/>
    </location>
</feature>
<feature type="sequence conflict" description="In Ref. 16; AA sequence." evidence="14" ref="16">
    <original>S</original>
    <variation>C</variation>
    <location>
        <position position="107"/>
    </location>
</feature>
<feature type="strand" evidence="15">
    <location>
        <begin position="97"/>
        <end position="105"/>
    </location>
</feature>
<feature type="helix" evidence="15">
    <location>
        <begin position="108"/>
        <end position="111"/>
    </location>
</feature>
<feature type="strand" evidence="15">
    <location>
        <begin position="118"/>
        <end position="121"/>
    </location>
</feature>
<feature type="strand" evidence="15">
    <location>
        <begin position="123"/>
        <end position="131"/>
    </location>
</feature>
<feature type="strand" evidence="15">
    <location>
        <begin position="140"/>
        <end position="159"/>
    </location>
</feature>
<feature type="strand" evidence="15">
    <location>
        <begin position="162"/>
        <end position="181"/>
    </location>
</feature>
<dbReference type="EMBL" id="K01401">
    <property type="protein sequence ID" value="AAA60552.1"/>
    <property type="molecule type" value="Genomic_DNA"/>
</dbReference>
<dbReference type="EMBL" id="K01918">
    <property type="protein sequence ID" value="AAA60552.1"/>
    <property type="status" value="JOINED"/>
    <property type="molecule type" value="Genomic_DNA"/>
</dbReference>
<dbReference type="EMBL" id="J00121">
    <property type="protein sequence ID" value="AAA60552.1"/>
    <property type="status" value="JOINED"/>
    <property type="molecule type" value="Genomic_DNA"/>
</dbReference>
<dbReference type="EMBL" id="K01398">
    <property type="protein sequence ID" value="AAA60552.1"/>
    <property type="status" value="JOINED"/>
    <property type="molecule type" value="Genomic_DNA"/>
</dbReference>
<dbReference type="EMBL" id="K01399">
    <property type="protein sequence ID" value="AAA60552.1"/>
    <property type="status" value="JOINED"/>
    <property type="molecule type" value="Genomic_DNA"/>
</dbReference>
<dbReference type="EMBL" id="K01400">
    <property type="protein sequence ID" value="AAA60552.1"/>
    <property type="status" value="JOINED"/>
    <property type="molecule type" value="Genomic_DNA"/>
</dbReference>
<dbReference type="EMBL" id="X02811">
    <property type="protein sequence ID" value="CAA26579.1"/>
    <property type="molecule type" value="mRNA"/>
</dbReference>
<dbReference type="EMBL" id="X02744">
    <property type="protein sequence ID" value="CAA26524.1"/>
    <property type="molecule type" value="mRNA"/>
</dbReference>
<dbReference type="EMBL" id="M12783">
    <property type="protein sequence ID" value="AAA60553.1"/>
    <property type="molecule type" value="mRNA"/>
</dbReference>
<dbReference type="EMBL" id="CR456538">
    <property type="protein sequence ID" value="CAG30424.1"/>
    <property type="molecule type" value="mRNA"/>
</dbReference>
<dbReference type="EMBL" id="Z81010">
    <property type="status" value="NOT_ANNOTATED_CDS"/>
    <property type="molecule type" value="Genomic_DNA"/>
</dbReference>
<dbReference type="EMBL" id="CR541807">
    <property type="protein sequence ID" value="CAG46606.1"/>
    <property type="molecule type" value="mRNA"/>
</dbReference>
<dbReference type="EMBL" id="CH471095">
    <property type="protein sequence ID" value="EAW60306.1"/>
    <property type="molecule type" value="Genomic_DNA"/>
</dbReference>
<dbReference type="EMBL" id="CH471095">
    <property type="protein sequence ID" value="EAW60307.1"/>
    <property type="molecule type" value="Genomic_DNA"/>
</dbReference>
<dbReference type="EMBL" id="BC029822">
    <property type="protein sequence ID" value="AAH29822.1"/>
    <property type="molecule type" value="mRNA"/>
</dbReference>
<dbReference type="EMBL" id="BC077725">
    <property type="protein sequence ID" value="AAH77725.1"/>
    <property type="molecule type" value="mRNA"/>
</dbReference>
<dbReference type="EMBL" id="X83705">
    <property type="protein sequence ID" value="CAA58679.1"/>
    <property type="molecule type" value="mRNA"/>
</dbReference>
<dbReference type="EMBL" id="X98706">
    <property type="protein sequence ID" value="CAA67262.1"/>
    <property type="molecule type" value="Genomic_DNA"/>
</dbReference>
<dbReference type="EMBL" id="K01917">
    <property type="protein sequence ID" value="AAA98793.1"/>
    <property type="molecule type" value="Genomic_DNA"/>
</dbReference>
<dbReference type="EMBL" id="K01913">
    <property type="protein sequence ID" value="AAA98793.1"/>
    <property type="status" value="JOINED"/>
    <property type="molecule type" value="Genomic_DNA"/>
</dbReference>
<dbReference type="EMBL" id="K01914">
    <property type="protein sequence ID" value="AAA98793.1"/>
    <property type="status" value="JOINED"/>
    <property type="molecule type" value="Genomic_DNA"/>
</dbReference>
<dbReference type="EMBL" id="K01915">
    <property type="protein sequence ID" value="AAA98793.1"/>
    <property type="status" value="JOINED"/>
    <property type="molecule type" value="Genomic_DNA"/>
</dbReference>
<dbReference type="EMBL" id="K01916">
    <property type="protein sequence ID" value="AAA98793.1"/>
    <property type="status" value="JOINED"/>
    <property type="molecule type" value="Genomic_DNA"/>
</dbReference>
<dbReference type="EMBL" id="X03702">
    <property type="protein sequence ID" value="CAA27333.1"/>
    <property type="molecule type" value="mRNA"/>
</dbReference>
<dbReference type="EMBL" id="X00561">
    <property type="protein sequence ID" value="CAA25228.1"/>
    <property type="molecule type" value="Genomic_DNA"/>
</dbReference>
<dbReference type="EMBL" id="X00561">
    <property type="protein sequence ID" value="CAA25229.1"/>
    <property type="molecule type" value="Genomic_DNA"/>
</dbReference>
<dbReference type="CCDS" id="CCDS13987.1">
    <molecule id="P01127-1"/>
</dbReference>
<dbReference type="CCDS" id="CCDS33650.1">
    <molecule id="P01127-2"/>
</dbReference>
<dbReference type="PIR" id="A94276">
    <property type="entry name" value="PFHUG2"/>
</dbReference>
<dbReference type="RefSeq" id="NP_002599.1">
    <molecule id="P01127-1"/>
    <property type="nucleotide sequence ID" value="NM_002608.4"/>
</dbReference>
<dbReference type="RefSeq" id="NP_148937.1">
    <molecule id="P01127-2"/>
    <property type="nucleotide sequence ID" value="NM_033016.3"/>
</dbReference>
<dbReference type="PDB" id="1PDG">
    <property type="method" value="X-ray"/>
    <property type="resolution" value="3.00 A"/>
    <property type="chains" value="A/B/C=82-190"/>
</dbReference>
<dbReference type="PDB" id="3MJG">
    <property type="method" value="X-ray"/>
    <property type="resolution" value="2.30 A"/>
    <property type="chains" value="A/B=21-185"/>
</dbReference>
<dbReference type="PDB" id="4HQU">
    <property type="method" value="X-ray"/>
    <property type="resolution" value="2.20 A"/>
    <property type="chains" value="A=82-190"/>
</dbReference>
<dbReference type="PDB" id="4HQX">
    <property type="method" value="X-ray"/>
    <property type="resolution" value="2.30 A"/>
    <property type="chains" value="A=82-183"/>
</dbReference>
<dbReference type="PDB" id="4QCI">
    <property type="method" value="X-ray"/>
    <property type="resolution" value="2.30 A"/>
    <property type="chains" value="C/D=82-190"/>
</dbReference>
<dbReference type="PDB" id="6T9E">
    <property type="method" value="X-ray"/>
    <property type="resolution" value="2.99 A"/>
    <property type="chains" value="CCC/DDD=82-190"/>
</dbReference>
<dbReference type="PDBsum" id="1PDG"/>
<dbReference type="PDBsum" id="3MJG"/>
<dbReference type="PDBsum" id="4HQU"/>
<dbReference type="PDBsum" id="4HQX"/>
<dbReference type="PDBsum" id="4QCI"/>
<dbReference type="PDBsum" id="6T9E"/>
<dbReference type="EMDB" id="EMD-6426"/>
<dbReference type="SMR" id="P01127"/>
<dbReference type="BioGRID" id="111181">
    <property type="interactions" value="93"/>
</dbReference>
<dbReference type="ComplexPortal" id="CPX-1875">
    <property type="entry name" value="Platelet-derived growth factor AB complex"/>
</dbReference>
<dbReference type="ComplexPortal" id="CPX-1876">
    <property type="entry name" value="Platelet-derived growth factor BB complex"/>
</dbReference>
<dbReference type="ComplexPortal" id="CPX-2882">
    <property type="entry name" value="PDGF receptor beta - PDGF-BB complex"/>
</dbReference>
<dbReference type="ComplexPortal" id="CPX-2883">
    <property type="entry name" value="PDGF receptor alpha-beta - PDGF-BB complex"/>
</dbReference>
<dbReference type="ComplexPortal" id="CPX-2884">
    <property type="entry name" value="PDGF receptor alpha - PDGF-BB complex"/>
</dbReference>
<dbReference type="ComplexPortal" id="CPX-2885">
    <property type="entry name" value="PDGF receptor alpha - PDGF-AB complex"/>
</dbReference>
<dbReference type="ComplexPortal" id="CPX-2886">
    <property type="entry name" value="PDGF receptor beta - PDGF-AB complex"/>
</dbReference>
<dbReference type="ComplexPortal" id="CPX-2892">
    <property type="entry name" value="PDGF receptor alpha-beta - PDGF-AB complex"/>
</dbReference>
<dbReference type="CORUM" id="P01127"/>
<dbReference type="DIP" id="DIP-5737N"/>
<dbReference type="FunCoup" id="P01127">
    <property type="interactions" value="1104"/>
</dbReference>
<dbReference type="IntAct" id="P01127">
    <property type="interactions" value="69"/>
</dbReference>
<dbReference type="STRING" id="9606.ENSP00000330382"/>
<dbReference type="BindingDB" id="P01127"/>
<dbReference type="ChEMBL" id="CHEMBL3108633"/>
<dbReference type="DrugBank" id="DB06325">
    <property type="generic name" value="Pegpleranib"/>
</dbReference>
<dbReference type="GlyConnect" id="754">
    <property type="glycosylation" value="4 N-Linked glycans (1 site)"/>
</dbReference>
<dbReference type="GlyCosmos" id="P01127">
    <property type="glycosylation" value="1 site, 5 glycans"/>
</dbReference>
<dbReference type="GlyGen" id="P01127">
    <property type="glycosylation" value="3 sites, 5 N-linked glycans (1 site), 1 O-linked glycan (2 sites)"/>
</dbReference>
<dbReference type="iPTMnet" id="P01127"/>
<dbReference type="PhosphoSitePlus" id="P01127"/>
<dbReference type="BioMuta" id="PDGFB"/>
<dbReference type="DMDM" id="129724"/>
<dbReference type="MassIVE" id="P01127"/>
<dbReference type="PaxDb" id="9606-ENSP00000330382"/>
<dbReference type="PeptideAtlas" id="P01127"/>
<dbReference type="ProteomicsDB" id="33745"/>
<dbReference type="ProteomicsDB" id="51325">
    <molecule id="P01127-1"/>
</dbReference>
<dbReference type="TopDownProteomics" id="P01127-2">
    <molecule id="P01127-2"/>
</dbReference>
<dbReference type="ABCD" id="P01127">
    <property type="antibodies" value="9 sequenced antibodies"/>
</dbReference>
<dbReference type="Antibodypedia" id="293">
    <property type="antibodies" value="732 antibodies from 42 providers"/>
</dbReference>
<dbReference type="DNASU" id="5155"/>
<dbReference type="Ensembl" id="ENST00000331163.11">
    <molecule id="P01127-1"/>
    <property type="protein sequence ID" value="ENSP00000330382.6"/>
    <property type="gene ID" value="ENSG00000100311.17"/>
</dbReference>
<dbReference type="Ensembl" id="ENST00000381551.8">
    <molecule id="P01127-2"/>
    <property type="protein sequence ID" value="ENSP00000370963.4"/>
    <property type="gene ID" value="ENSG00000100311.17"/>
</dbReference>
<dbReference type="GeneID" id="5155"/>
<dbReference type="KEGG" id="hsa:5155"/>
<dbReference type="MANE-Select" id="ENST00000331163.11">
    <property type="protein sequence ID" value="ENSP00000330382.6"/>
    <property type="RefSeq nucleotide sequence ID" value="NM_002608.4"/>
    <property type="RefSeq protein sequence ID" value="NP_002599.1"/>
</dbReference>
<dbReference type="UCSC" id="uc003axe.4">
    <molecule id="P01127-1"/>
    <property type="organism name" value="human"/>
</dbReference>
<dbReference type="AGR" id="HGNC:8800"/>
<dbReference type="CTD" id="5155"/>
<dbReference type="DisGeNET" id="5155"/>
<dbReference type="GeneCards" id="PDGFB"/>
<dbReference type="GeneReviews" id="PDGFB"/>
<dbReference type="HGNC" id="HGNC:8800">
    <property type="gene designation" value="PDGFB"/>
</dbReference>
<dbReference type="HPA" id="ENSG00000100311">
    <property type="expression patterns" value="Low tissue specificity"/>
</dbReference>
<dbReference type="MalaCards" id="PDGFB"/>
<dbReference type="MIM" id="190040">
    <property type="type" value="gene"/>
</dbReference>
<dbReference type="MIM" id="607907">
    <property type="type" value="phenotype"/>
</dbReference>
<dbReference type="MIM" id="615483">
    <property type="type" value="phenotype"/>
</dbReference>
<dbReference type="neXtProt" id="NX_P01127"/>
<dbReference type="OpenTargets" id="ENSG00000100311"/>
<dbReference type="Orphanet" id="1980">
    <property type="disease" value="Bilateral striopallidodentate calcinosis"/>
</dbReference>
<dbReference type="Orphanet" id="31112">
    <property type="disease" value="Dermatofibrosarcoma protuberans"/>
</dbReference>
<dbReference type="Orphanet" id="263662">
    <property type="disease" value="Familial multiple meningioma"/>
</dbReference>
<dbReference type="Orphanet" id="2495">
    <property type="disease" value="Meningioma"/>
</dbReference>
<dbReference type="PharmGKB" id="PA33145"/>
<dbReference type="VEuPathDB" id="HostDB:ENSG00000100311"/>
<dbReference type="eggNOG" id="ENOG502S2VW">
    <property type="taxonomic scope" value="Eukaryota"/>
</dbReference>
<dbReference type="GeneTree" id="ENSGT00940000157367"/>
<dbReference type="HOGENOM" id="CLU_094438_0_0_1"/>
<dbReference type="InParanoid" id="P01127"/>
<dbReference type="OMA" id="KHTHDKE"/>
<dbReference type="OrthoDB" id="8878063at2759"/>
<dbReference type="PAN-GO" id="P01127">
    <property type="GO annotations" value="9 GO annotations based on evolutionary models"/>
</dbReference>
<dbReference type="PhylomeDB" id="P01127"/>
<dbReference type="TreeFam" id="TF319554"/>
<dbReference type="PathwayCommons" id="P01127"/>
<dbReference type="Reactome" id="R-HSA-114608">
    <property type="pathway name" value="Platelet degranulation"/>
</dbReference>
<dbReference type="Reactome" id="R-HSA-1257604">
    <property type="pathway name" value="PIP3 activates AKT signaling"/>
</dbReference>
<dbReference type="Reactome" id="R-HSA-186763">
    <property type="pathway name" value="Downstream signal transduction"/>
</dbReference>
<dbReference type="Reactome" id="R-HSA-186797">
    <property type="pathway name" value="Signaling by PDGF"/>
</dbReference>
<dbReference type="Reactome" id="R-HSA-2219530">
    <property type="pathway name" value="Constitutive Signaling by Aberrant PI3K in Cancer"/>
</dbReference>
<dbReference type="Reactome" id="R-HSA-3000171">
    <property type="pathway name" value="Non-integrin membrane-ECM interactions"/>
</dbReference>
<dbReference type="Reactome" id="R-HSA-5673001">
    <property type="pathway name" value="RAF/MAP kinase cascade"/>
</dbReference>
<dbReference type="Reactome" id="R-HSA-6811558">
    <property type="pathway name" value="PI5P, PP2A and IER3 Regulate PI3K/AKT Signaling"/>
</dbReference>
<dbReference type="SignaLink" id="P01127"/>
<dbReference type="SIGNOR" id="P01127"/>
<dbReference type="BioGRID-ORCS" id="5155">
    <property type="hits" value="8 hits in 1145 CRISPR screens"/>
</dbReference>
<dbReference type="ChiTaRS" id="PDGFB">
    <property type="organism name" value="human"/>
</dbReference>
<dbReference type="EvolutionaryTrace" id="P01127"/>
<dbReference type="GeneWiki" id="PDGFB"/>
<dbReference type="GenomeRNAi" id="5155"/>
<dbReference type="Pharos" id="P01127">
    <property type="development level" value="Tbio"/>
</dbReference>
<dbReference type="PRO" id="PR:P01127"/>
<dbReference type="Proteomes" id="UP000005640">
    <property type="component" value="Chromosome 22"/>
</dbReference>
<dbReference type="RNAct" id="P01127">
    <property type="molecule type" value="protein"/>
</dbReference>
<dbReference type="Bgee" id="ENSG00000100311">
    <property type="expression patterns" value="Expressed in olfactory bulb and 189 other cell types or tissues"/>
</dbReference>
<dbReference type="ExpressionAtlas" id="P01127">
    <property type="expression patterns" value="baseline and differential"/>
</dbReference>
<dbReference type="GO" id="GO:0016323">
    <property type="term" value="C:basolateral plasma membrane"/>
    <property type="evidence" value="ECO:0000250"/>
    <property type="project" value="UniProtKB"/>
</dbReference>
<dbReference type="GO" id="GO:0009986">
    <property type="term" value="C:cell surface"/>
    <property type="evidence" value="ECO:0000314"/>
    <property type="project" value="BHF-UCL"/>
</dbReference>
<dbReference type="GO" id="GO:0062023">
    <property type="term" value="C:collagen-containing extracellular matrix"/>
    <property type="evidence" value="ECO:0007005"/>
    <property type="project" value="BHF-UCL"/>
</dbReference>
<dbReference type="GO" id="GO:0005737">
    <property type="term" value="C:cytoplasm"/>
    <property type="evidence" value="ECO:0000250"/>
    <property type="project" value="UniProtKB"/>
</dbReference>
<dbReference type="GO" id="GO:0005788">
    <property type="term" value="C:endoplasmic reticulum lumen"/>
    <property type="evidence" value="ECO:0000304"/>
    <property type="project" value="Reactome"/>
</dbReference>
<dbReference type="GO" id="GO:0005576">
    <property type="term" value="C:extracellular region"/>
    <property type="evidence" value="ECO:0000304"/>
    <property type="project" value="Reactome"/>
</dbReference>
<dbReference type="GO" id="GO:0005615">
    <property type="term" value="C:extracellular space"/>
    <property type="evidence" value="ECO:0000318"/>
    <property type="project" value="GO_Central"/>
</dbReference>
<dbReference type="GO" id="GO:0005796">
    <property type="term" value="C:Golgi lumen"/>
    <property type="evidence" value="ECO:0000304"/>
    <property type="project" value="Reactome"/>
</dbReference>
<dbReference type="GO" id="GO:0000139">
    <property type="term" value="C:Golgi membrane"/>
    <property type="evidence" value="ECO:0000304"/>
    <property type="project" value="Reactome"/>
</dbReference>
<dbReference type="GO" id="GO:0031093">
    <property type="term" value="C:platelet alpha granule lumen"/>
    <property type="evidence" value="ECO:0000304"/>
    <property type="project" value="Reactome"/>
</dbReference>
<dbReference type="GO" id="GO:1990265">
    <property type="term" value="C:platelet-derived growth factor complex"/>
    <property type="evidence" value="ECO:0000353"/>
    <property type="project" value="ComplexPortal"/>
</dbReference>
<dbReference type="GO" id="GO:0042056">
    <property type="term" value="F:chemoattractant activity"/>
    <property type="evidence" value="ECO:0000314"/>
    <property type="project" value="BHF-UCL"/>
</dbReference>
<dbReference type="GO" id="GO:0005518">
    <property type="term" value="F:collagen binding"/>
    <property type="evidence" value="ECO:0000314"/>
    <property type="project" value="MGI"/>
</dbReference>
<dbReference type="GO" id="GO:0008083">
    <property type="term" value="F:growth factor activity"/>
    <property type="evidence" value="ECO:0000314"/>
    <property type="project" value="UniProtKB"/>
</dbReference>
<dbReference type="GO" id="GO:0042802">
    <property type="term" value="F:identical protein binding"/>
    <property type="evidence" value="ECO:0000353"/>
    <property type="project" value="IntAct"/>
</dbReference>
<dbReference type="GO" id="GO:0048407">
    <property type="term" value="F:platelet-derived growth factor binding"/>
    <property type="evidence" value="ECO:0000353"/>
    <property type="project" value="BHF-UCL"/>
</dbReference>
<dbReference type="GO" id="GO:0005161">
    <property type="term" value="F:platelet-derived growth factor receptor binding"/>
    <property type="evidence" value="ECO:0000314"/>
    <property type="project" value="BHF-UCL"/>
</dbReference>
<dbReference type="GO" id="GO:0046982">
    <property type="term" value="F:protein heterodimerization activity"/>
    <property type="evidence" value="ECO:0000353"/>
    <property type="project" value="BHF-UCL"/>
</dbReference>
<dbReference type="GO" id="GO:0042803">
    <property type="term" value="F:protein homodimerization activity"/>
    <property type="evidence" value="ECO:0000314"/>
    <property type="project" value="BHF-UCL"/>
</dbReference>
<dbReference type="GO" id="GO:0016176">
    <property type="term" value="F:superoxide-generating NADPH oxidase activator activity"/>
    <property type="evidence" value="ECO:0000314"/>
    <property type="project" value="UniProtKB"/>
</dbReference>
<dbReference type="GO" id="GO:0001525">
    <property type="term" value="P:angiogenesis"/>
    <property type="evidence" value="ECO:0000318"/>
    <property type="project" value="GO_Central"/>
</dbReference>
<dbReference type="GO" id="GO:0060326">
    <property type="term" value="P:cell chemotaxis"/>
    <property type="evidence" value="ECO:0000314"/>
    <property type="project" value="UniProtKB"/>
</dbReference>
<dbReference type="GO" id="GO:0071363">
    <property type="term" value="P:cellular response to growth factor stimulus"/>
    <property type="evidence" value="ECO:0000314"/>
    <property type="project" value="BHF-UCL"/>
</dbReference>
<dbReference type="GO" id="GO:0071506">
    <property type="term" value="P:cellular response to mycophenolic acid"/>
    <property type="evidence" value="ECO:0000250"/>
    <property type="project" value="UniProtKB"/>
</dbReference>
<dbReference type="GO" id="GO:0036120">
    <property type="term" value="P:cellular response to platelet-derived growth factor stimulus"/>
    <property type="evidence" value="ECO:0000250"/>
    <property type="project" value="BHF-UCL"/>
</dbReference>
<dbReference type="GO" id="GO:0001892">
    <property type="term" value="P:embryonic placenta development"/>
    <property type="evidence" value="ECO:0000250"/>
    <property type="project" value="UniProtKB"/>
</dbReference>
<dbReference type="GO" id="GO:0010467">
    <property type="term" value="P:gene expression"/>
    <property type="evidence" value="ECO:0000314"/>
    <property type="project" value="UniProtKB"/>
</dbReference>
<dbReference type="GO" id="GO:0007507">
    <property type="term" value="P:heart development"/>
    <property type="evidence" value="ECO:0000250"/>
    <property type="project" value="UniProtKB"/>
</dbReference>
<dbReference type="GO" id="GO:0035655">
    <property type="term" value="P:interleukin-18-mediated signaling pathway"/>
    <property type="evidence" value="ECO:0000314"/>
    <property type="project" value="BHF-UCL"/>
</dbReference>
<dbReference type="GO" id="GO:0035556">
    <property type="term" value="P:intracellular signal transduction"/>
    <property type="evidence" value="ECO:0000315"/>
    <property type="project" value="UniProtKB"/>
</dbReference>
<dbReference type="GO" id="GO:0072255">
    <property type="term" value="P:metanephric glomerular mesangial cell development"/>
    <property type="evidence" value="ECO:0000250"/>
    <property type="project" value="UniProtKB"/>
</dbReference>
<dbReference type="GO" id="GO:0002548">
    <property type="term" value="P:monocyte chemotaxis"/>
    <property type="evidence" value="ECO:0000314"/>
    <property type="project" value="BHF-UCL"/>
</dbReference>
<dbReference type="GO" id="GO:0045892">
    <property type="term" value="P:negative regulation of DNA-templated transcription"/>
    <property type="evidence" value="ECO:0000314"/>
    <property type="project" value="BHF-UCL"/>
</dbReference>
<dbReference type="GO" id="GO:0010629">
    <property type="term" value="P:negative regulation of gene expression"/>
    <property type="evidence" value="ECO:0000314"/>
    <property type="project" value="UniProtKB"/>
</dbReference>
<dbReference type="GO" id="GO:1902894">
    <property type="term" value="P:negative regulation of miRNA transcription"/>
    <property type="evidence" value="ECO:0000314"/>
    <property type="project" value="BHF-UCL"/>
</dbReference>
<dbReference type="GO" id="GO:0010512">
    <property type="term" value="P:negative regulation of phosphatidylinositol biosynthetic process"/>
    <property type="evidence" value="ECO:0000314"/>
    <property type="project" value="BHF-UCL"/>
</dbReference>
<dbReference type="GO" id="GO:0010544">
    <property type="term" value="P:negative regulation of platelet activation"/>
    <property type="evidence" value="ECO:0000314"/>
    <property type="project" value="BHF-UCL"/>
</dbReference>
<dbReference type="GO" id="GO:1905064">
    <property type="term" value="P:negative regulation of vascular associated smooth muscle cell differentiation"/>
    <property type="evidence" value="ECO:0000314"/>
    <property type="project" value="BHF-UCL"/>
</dbReference>
<dbReference type="GO" id="GO:0038001">
    <property type="term" value="P:paracrine signaling"/>
    <property type="evidence" value="ECO:0000250"/>
    <property type="project" value="UniProtKB"/>
</dbReference>
<dbReference type="GO" id="GO:0018108">
    <property type="term" value="P:peptidyl-tyrosine phosphorylation"/>
    <property type="evidence" value="ECO:0000314"/>
    <property type="project" value="UniProtKB"/>
</dbReference>
<dbReference type="GO" id="GO:0048008">
    <property type="term" value="P:platelet-derived growth factor receptor signaling pathway"/>
    <property type="evidence" value="ECO:0000314"/>
    <property type="project" value="UniProtKB"/>
</dbReference>
<dbReference type="GO" id="GO:0043536">
    <property type="term" value="P:positive regulation of blood vessel endothelial cell migration"/>
    <property type="evidence" value="ECO:0000314"/>
    <property type="project" value="BHF-UCL"/>
</dbReference>
<dbReference type="GO" id="GO:0090280">
    <property type="term" value="P:positive regulation of calcium ion import"/>
    <property type="evidence" value="ECO:0000314"/>
    <property type="project" value="UniProtKB"/>
</dbReference>
<dbReference type="GO" id="GO:0051781">
    <property type="term" value="P:positive regulation of cell division"/>
    <property type="evidence" value="ECO:0007669"/>
    <property type="project" value="UniProtKB-KW"/>
</dbReference>
<dbReference type="GO" id="GO:0030335">
    <property type="term" value="P:positive regulation of cell migration"/>
    <property type="evidence" value="ECO:0000314"/>
    <property type="project" value="UniProtKB"/>
</dbReference>
<dbReference type="GO" id="GO:0008284">
    <property type="term" value="P:positive regulation of cell population proliferation"/>
    <property type="evidence" value="ECO:0000314"/>
    <property type="project" value="UniProtKB"/>
</dbReference>
<dbReference type="GO" id="GO:0010811">
    <property type="term" value="P:positive regulation of cell-substrate adhesion"/>
    <property type="evidence" value="ECO:0000314"/>
    <property type="project" value="BHF-UCL"/>
</dbReference>
<dbReference type="GO" id="GO:0050921">
    <property type="term" value="P:positive regulation of chemotaxis"/>
    <property type="evidence" value="ECO:0000314"/>
    <property type="project" value="UniProtKB"/>
</dbReference>
<dbReference type="GO" id="GO:2000573">
    <property type="term" value="P:positive regulation of DNA biosynthetic process"/>
    <property type="evidence" value="ECO:0000314"/>
    <property type="project" value="UniProtKB"/>
</dbReference>
<dbReference type="GO" id="GO:0045893">
    <property type="term" value="P:positive regulation of DNA-templated transcription"/>
    <property type="evidence" value="ECO:0000314"/>
    <property type="project" value="UniProtKB"/>
</dbReference>
<dbReference type="GO" id="GO:0001938">
    <property type="term" value="P:positive regulation of endothelial cell proliferation"/>
    <property type="evidence" value="ECO:0000314"/>
    <property type="project" value="BHF-UCL"/>
</dbReference>
<dbReference type="GO" id="GO:0070374">
    <property type="term" value="P:positive regulation of ERK1 and ERK2 cascade"/>
    <property type="evidence" value="ECO:0000314"/>
    <property type="project" value="UniProtKB"/>
</dbReference>
<dbReference type="GO" id="GO:0048146">
    <property type="term" value="P:positive regulation of fibroblast proliferation"/>
    <property type="evidence" value="ECO:0000314"/>
    <property type="project" value="UniProtKB"/>
</dbReference>
<dbReference type="GO" id="GO:0010628">
    <property type="term" value="P:positive regulation of gene expression"/>
    <property type="evidence" value="ECO:0000314"/>
    <property type="project" value="BHF-UCL"/>
</dbReference>
<dbReference type="GO" id="GO:0003104">
    <property type="term" value="P:positive regulation of glomerular filtration"/>
    <property type="evidence" value="ECO:0000250"/>
    <property type="project" value="UniProtKB"/>
</dbReference>
<dbReference type="GO" id="GO:0072126">
    <property type="term" value="P:positive regulation of glomerular mesangial cell proliferation"/>
    <property type="evidence" value="ECO:0000314"/>
    <property type="project" value="UniProtKB"/>
</dbReference>
<dbReference type="GO" id="GO:1900127">
    <property type="term" value="P:positive regulation of hyaluronan biosynthetic process"/>
    <property type="evidence" value="ECO:0000314"/>
    <property type="project" value="UniProtKB"/>
</dbReference>
<dbReference type="GO" id="GO:0043406">
    <property type="term" value="P:positive regulation of MAP kinase activity"/>
    <property type="evidence" value="ECO:0000314"/>
    <property type="project" value="UniProtKB"/>
</dbReference>
<dbReference type="GO" id="GO:0043410">
    <property type="term" value="P:positive regulation of MAPK cascade"/>
    <property type="evidence" value="ECO:0000315"/>
    <property type="project" value="UniProtKB"/>
</dbReference>
<dbReference type="GO" id="GO:2000591">
    <property type="term" value="P:positive regulation of metanephric mesenchymal cell migration"/>
    <property type="evidence" value="ECO:0000314"/>
    <property type="project" value="UniProtKB"/>
</dbReference>
<dbReference type="GO" id="GO:0035793">
    <property type="term" value="P:positive regulation of metanephric mesenchymal cell migration by platelet-derived growth factor receptor-beta signaling pathway"/>
    <property type="evidence" value="ECO:0000314"/>
    <property type="project" value="UniProtKB"/>
</dbReference>
<dbReference type="GO" id="GO:1902895">
    <property type="term" value="P:positive regulation of miRNA transcription"/>
    <property type="evidence" value="ECO:0000314"/>
    <property type="project" value="BHF-UCL"/>
</dbReference>
<dbReference type="GO" id="GO:0045840">
    <property type="term" value="P:positive regulation of mitotic nuclear division"/>
    <property type="evidence" value="ECO:0000314"/>
    <property type="project" value="UniProtKB"/>
</dbReference>
<dbReference type="GO" id="GO:0051897">
    <property type="term" value="P:positive regulation of phosphatidylinositol 3-kinase/protein kinase B signal transduction"/>
    <property type="evidence" value="ECO:0000314"/>
    <property type="project" value="UniProtKB"/>
</dbReference>
<dbReference type="GO" id="GO:0031954">
    <property type="term" value="P:positive regulation of protein autophosphorylation"/>
    <property type="evidence" value="ECO:0000314"/>
    <property type="project" value="UniProtKB"/>
</dbReference>
<dbReference type="GO" id="GO:2000379">
    <property type="term" value="P:positive regulation of reactive oxygen species metabolic process"/>
    <property type="evidence" value="ECO:0000314"/>
    <property type="project" value="UniProtKB"/>
</dbReference>
<dbReference type="GO" id="GO:0014911">
    <property type="term" value="P:positive regulation of smooth muscle cell migration"/>
    <property type="evidence" value="ECO:0000314"/>
    <property type="project" value="BHF-UCL"/>
</dbReference>
<dbReference type="GO" id="GO:0048661">
    <property type="term" value="P:positive regulation of smooth muscle cell proliferation"/>
    <property type="evidence" value="ECO:0000314"/>
    <property type="project" value="BHF-UCL"/>
</dbReference>
<dbReference type="GO" id="GO:1905176">
    <property type="term" value="P:positive regulation of vascular associated smooth muscle cell dedifferentiation"/>
    <property type="evidence" value="ECO:0000314"/>
    <property type="project" value="BHF-UCL"/>
</dbReference>
<dbReference type="GO" id="GO:1904754">
    <property type="term" value="P:positive regulation of vascular associated smooth muscle cell migration"/>
    <property type="evidence" value="ECO:0000314"/>
    <property type="project" value="UniProtKB"/>
</dbReference>
<dbReference type="GO" id="GO:1904707">
    <property type="term" value="P:positive regulation of vascular associated smooth muscle cell proliferation"/>
    <property type="evidence" value="ECO:0000314"/>
    <property type="project" value="UniProtKB"/>
</dbReference>
<dbReference type="GO" id="GO:0006468">
    <property type="term" value="P:protein phosphorylation"/>
    <property type="evidence" value="ECO:0000314"/>
    <property type="project" value="UniProtKB"/>
</dbReference>
<dbReference type="GO" id="GO:0072593">
    <property type="term" value="P:reactive oxygen species metabolic process"/>
    <property type="evidence" value="ECO:0000315"/>
    <property type="project" value="UniProtKB"/>
</dbReference>
<dbReference type="GO" id="GO:0009611">
    <property type="term" value="P:response to wounding"/>
    <property type="evidence" value="ECO:0000314"/>
    <property type="project" value="BHF-UCL"/>
</dbReference>
<dbReference type="GO" id="GO:0014805">
    <property type="term" value="P:smooth muscle adaptation"/>
    <property type="evidence" value="ECO:0000303"/>
    <property type="project" value="BHF-UCL"/>
</dbReference>
<dbReference type="CDD" id="cd00135">
    <property type="entry name" value="PDGF"/>
    <property type="match status" value="1"/>
</dbReference>
<dbReference type="DisProt" id="DP02770"/>
<dbReference type="FunFam" id="2.10.90.10:FF:000023">
    <property type="entry name" value="Platelet-derived growth factor subunit B"/>
    <property type="match status" value="1"/>
</dbReference>
<dbReference type="Gene3D" id="2.10.90.10">
    <property type="entry name" value="Cystine-knot cytokines"/>
    <property type="match status" value="1"/>
</dbReference>
<dbReference type="InterPro" id="IPR029034">
    <property type="entry name" value="Cystine-knot_cytokine"/>
</dbReference>
<dbReference type="InterPro" id="IPR023581">
    <property type="entry name" value="PD_growth_factor_CS"/>
</dbReference>
<dbReference type="InterPro" id="IPR000072">
    <property type="entry name" value="PDGF/VEGF_dom"/>
</dbReference>
<dbReference type="InterPro" id="IPR006782">
    <property type="entry name" value="PDGF_N"/>
</dbReference>
<dbReference type="PANTHER" id="PTHR11633">
    <property type="entry name" value="PLATELET-DERIVED GROWTH FACTOR"/>
    <property type="match status" value="1"/>
</dbReference>
<dbReference type="PANTHER" id="PTHR11633:SF2">
    <property type="entry name" value="PLATELET-DERIVED GROWTH FACTOR SUBUNIT B"/>
    <property type="match status" value="1"/>
</dbReference>
<dbReference type="Pfam" id="PF00341">
    <property type="entry name" value="PDGF"/>
    <property type="match status" value="1"/>
</dbReference>
<dbReference type="Pfam" id="PF04692">
    <property type="entry name" value="PDGF_N"/>
    <property type="match status" value="1"/>
</dbReference>
<dbReference type="SMART" id="SM00141">
    <property type="entry name" value="PDGF"/>
    <property type="match status" value="1"/>
</dbReference>
<dbReference type="SUPFAM" id="SSF57501">
    <property type="entry name" value="Cystine-knot cytokines"/>
    <property type="match status" value="1"/>
</dbReference>
<dbReference type="PROSITE" id="PS00249">
    <property type="entry name" value="PDGF_1"/>
    <property type="match status" value="1"/>
</dbReference>
<dbReference type="PROSITE" id="PS50278">
    <property type="entry name" value="PDGF_2"/>
    <property type="match status" value="1"/>
</dbReference>
<name>PDGFB_HUMAN</name>
<organism>
    <name type="scientific">Homo sapiens</name>
    <name type="common">Human</name>
    <dbReference type="NCBI Taxonomy" id="9606"/>
    <lineage>
        <taxon>Eukaryota</taxon>
        <taxon>Metazoa</taxon>
        <taxon>Chordata</taxon>
        <taxon>Craniata</taxon>
        <taxon>Vertebrata</taxon>
        <taxon>Euteleostomi</taxon>
        <taxon>Mammalia</taxon>
        <taxon>Eutheria</taxon>
        <taxon>Euarchontoglires</taxon>
        <taxon>Primates</taxon>
        <taxon>Haplorrhini</taxon>
        <taxon>Catarrhini</taxon>
        <taxon>Hominidae</taxon>
        <taxon>Homo</taxon>
    </lineage>
</organism>
<evidence type="ECO:0000250" key="1"/>
<evidence type="ECO:0000250" key="2">
    <source>
        <dbReference type="UniProtKB" id="P31240"/>
    </source>
</evidence>
<evidence type="ECO:0000255" key="3"/>
<evidence type="ECO:0000256" key="4">
    <source>
        <dbReference type="SAM" id="MobiDB-lite"/>
    </source>
</evidence>
<evidence type="ECO:0000269" key="5">
    <source>
    </source>
</evidence>
<evidence type="ECO:0000269" key="6">
    <source>
    </source>
</evidence>
<evidence type="ECO:0000269" key="7">
    <source>
    </source>
</evidence>
<evidence type="ECO:0000269" key="8">
    <source>
    </source>
</evidence>
<evidence type="ECO:0000269" key="9">
    <source>
    </source>
</evidence>
<evidence type="ECO:0000269" key="10">
    <source>
    </source>
</evidence>
<evidence type="ECO:0000269" key="11">
    <source>
    </source>
</evidence>
<evidence type="ECO:0000269" key="12">
    <source>
    </source>
</evidence>
<evidence type="ECO:0000303" key="13">
    <source>
    </source>
</evidence>
<evidence type="ECO:0000305" key="14"/>
<evidence type="ECO:0007829" key="15">
    <source>
        <dbReference type="PDB" id="4HQU"/>
    </source>
</evidence>
<gene>
    <name type="primary">PDGFB</name>
    <name type="synonym">PDGF2</name>
    <name type="synonym">SIS</name>
</gene>
<comment type="function">
    <text evidence="2 11">Growth factor that plays an essential role in the regulation of embryonic development, cell proliferation, cell migration, survival and chemotaxis. Potent mitogen for cells of mesenchymal origin (PubMed:26599395). Required for normal proliferation and recruitment of pericytes and vascular smooth muscle cells in the central nervous system, skin, lung, heart and placenta. Required for normal blood vessel development, and for normal development of kidney glomeruli. Plays an important role in wound healing. Signaling is modulated by the formation of heterodimers with PDGFA (By similarity).</text>
</comment>
<comment type="subunit">
    <text evidence="1 7 8 12">Antiparallel homodimer; disulfide-linked. Antiparallel heterodimer with PDGFA; disulfide-linked. The PDGFB homodimer interacts with PDGFRA and PDGFRB homodimers, and with heterodimers formed by PDGFRA and PDGFRB. The heterodimer composed of PDGFA and PDGFB interacts with PDGFRB homodimers, and with heterodimers formed by PDGFRA and PDGFRB. Interacts with XLKD1 (By similarity). Interacts with LRP1 (PubMed:15053742). Interacts with SORL1 (via the N-terminal ectodomain) (PubMed:15053742, PubMed:16393139). Interacts with CD82; this interaction inhibits PDGFB-mediated signaling pathway (PubMed:34530889).</text>
</comment>
<comment type="interaction">
    <interactant intactId="EBI-1554925">
        <id>P01127</id>
    </interactant>
    <interactant intactId="EBI-711154">
        <id>Q9P287</id>
        <label>BCCIP</label>
    </interactant>
    <organismsDiffer>false</organismsDiffer>
    <experiments>3</experiments>
</comment>
<comment type="interaction">
    <interactant intactId="EBI-1554925">
        <id>P01127</id>
    </interactant>
    <interactant intactId="EBI-1554925">
        <id>P01127</id>
        <label>PDGFB</label>
    </interactant>
    <organismsDiffer>false</organismsDiffer>
    <experiments>3</experiments>
</comment>
<comment type="interaction">
    <interactant intactId="EBI-1554925">
        <id>P01127</id>
    </interactant>
    <interactant intactId="EBI-2861522">
        <id>P16234</id>
        <label>PDGFRA</label>
    </interactant>
    <organismsDiffer>false</organismsDiffer>
    <experiments>11</experiments>
</comment>
<comment type="interaction">
    <interactant intactId="EBI-1554925">
        <id>P01127</id>
    </interactant>
    <interactant intactId="EBI-641237">
        <id>P09619</id>
        <label>PDGFRB</label>
    </interactant>
    <organismsDiffer>false</organismsDiffer>
    <experiments>16</experiments>
</comment>
<comment type="subcellular location">
    <subcellularLocation>
        <location>Secreted</location>
    </subcellularLocation>
    <text>Released by platelets upon wounding.</text>
</comment>
<comment type="alternative products">
    <event type="alternative promoter"/>
    <isoform>
        <id>P01127-1</id>
        <name>1</name>
        <sequence type="displayed"/>
    </isoform>
    <isoform>
        <id>P01127-2</id>
        <name>2</name>
        <sequence type="described" ref="VSP_044913"/>
    </isoform>
</comment>
<comment type="tissue specificity">
    <text evidence="5">Expressed at high levels in the heart, brain (sustantia nigra), placenta and fetal kidney. Expressed at moderate levels in the brain (hippocampus), skeletal muscle, kidney and lung.</text>
</comment>
<comment type="disease" evidence="10 11">
    <disease id="DI-03923">
        <name>Basal ganglia calcification, idiopathic, 5</name>
        <acronym>IBGC5</acronym>
        <description>A form of basal ganglia calcification, an autosomal dominant condition characterized by symmetric calcification in the basal ganglia and other brain regions. Affected individuals can either be asymptomatic or show a wide spectrum of neuropsychiatric symptoms, including parkinsonism, dystonia, tremor, ataxia, dementia, psychosis, seizures, and chronic headache. Serum levels of calcium, phosphate, alkaline phosphatase and parathyroid hormone are normal. The neuropathological hallmark of the disease is vascular and pericapillary calcification, mainly of calcium phosphate, in the affected brain areas.</description>
        <dbReference type="MIM" id="615483"/>
    </disease>
    <text>The disease is caused by variants affecting the gene represented in this entry.</text>
</comment>
<comment type="disease">
    <text evidence="6">A chromosomal aberration involving PDGFB is found in dermatofibrosarcoma protuberans. Translocation t(17;22)(q22;q13) with PDGFB.</text>
</comment>
<comment type="pharmaceutical">
    <text>Available under the name Regranex (Ortho-McNeil). Used to promote healing in diabetic neuropathic foot ulcers.</text>
</comment>
<comment type="similarity">
    <text evidence="14">Belongs to the PDGF/VEGF growth factor family.</text>
</comment>
<comment type="online information" name="Atlas of Genetics and Cytogenetics in Oncology and Haematology">
    <link uri="https://atlasgeneticsoncology.org/gene/155/PDGFB"/>
</comment>
<sequence>MNRCWALFLSLCCYLRLVSAEGDPIPEELYEMLSDHSIRSFDDLQRLLHGDPGEEDGAELDLNMTRSHSGGELESLARGRRSLGSLTIAEPAMIAECKTRTEVFEISRRLIDRTNANFLVWPPCVEVQRCSGCCNNRNVQCRPTQVQLRPVQVRKIEIVRKKPIFKKATVTLEDHLACKCETVAAARPVTRSPGGSQEQRAKTPQTRVTIRTVRVRRPPKGKHRKFKHTHDKTALKETLGA</sequence>